<keyword id="KW-1185">Reference proteome</keyword>
<keyword id="KW-0687">Ribonucleoprotein</keyword>
<keyword id="KW-0689">Ribosomal protein</keyword>
<keyword id="KW-0694">RNA-binding</keyword>
<keyword id="KW-0699">rRNA-binding</keyword>
<gene>
    <name evidence="1" type="primary">rpsO</name>
    <name type="ordered locus">OTBS_0163</name>
</gene>
<comment type="function">
    <text evidence="1">One of the primary rRNA binding proteins, it binds directly to 16S rRNA where it helps nucleate assembly of the platform of the 30S subunit by binding and bridging several RNA helices of the 16S rRNA.</text>
</comment>
<comment type="function">
    <text evidence="1">Forms an intersubunit bridge (bridge B4) with the 23S rRNA of the 50S subunit in the ribosome.</text>
</comment>
<comment type="subunit">
    <text evidence="1">Part of the 30S ribosomal subunit. Forms a bridge to the 50S subunit in the 70S ribosome, contacting the 23S rRNA.</text>
</comment>
<comment type="similarity">
    <text evidence="1">Belongs to the universal ribosomal protein uS15 family.</text>
</comment>
<feature type="chain" id="PRO_1000054831" description="Small ribosomal subunit protein uS15">
    <location>
        <begin position="1"/>
        <end position="89"/>
    </location>
</feature>
<reference key="1">
    <citation type="journal article" date="2007" name="Proc. Natl. Acad. Sci. U.S.A.">
        <title>The Orientia tsutsugamushi genome reveals massive proliferation of conjugative type IV secretion system and host-cell interaction genes.</title>
        <authorList>
            <person name="Cho N.-H."/>
            <person name="Kim H.-R."/>
            <person name="Lee J.-H."/>
            <person name="Kim S.-Y."/>
            <person name="Kim J."/>
            <person name="Cha S."/>
            <person name="Kim S.-Y."/>
            <person name="Darby A.C."/>
            <person name="Fuxelius H.-H."/>
            <person name="Yin J."/>
            <person name="Kim J.H."/>
            <person name="Kim J."/>
            <person name="Lee S.J."/>
            <person name="Koh Y.-S."/>
            <person name="Jang W.-J."/>
            <person name="Park K.-H."/>
            <person name="Andersson S.G.E."/>
            <person name="Choi M.-S."/>
            <person name="Kim I.-S."/>
        </authorList>
    </citation>
    <scope>NUCLEOTIDE SEQUENCE [LARGE SCALE GENOMIC DNA]</scope>
    <source>
        <strain>Boryong</strain>
    </source>
</reference>
<protein>
    <recommendedName>
        <fullName evidence="1">Small ribosomal subunit protein uS15</fullName>
    </recommendedName>
    <alternativeName>
        <fullName evidence="2">30S ribosomal protein S15</fullName>
    </alternativeName>
</protein>
<organism>
    <name type="scientific">Orientia tsutsugamushi (strain Boryong)</name>
    <name type="common">Rickettsia tsutsugamushi</name>
    <dbReference type="NCBI Taxonomy" id="357244"/>
    <lineage>
        <taxon>Bacteria</taxon>
        <taxon>Pseudomonadati</taxon>
        <taxon>Pseudomonadota</taxon>
        <taxon>Alphaproteobacteria</taxon>
        <taxon>Rickettsiales</taxon>
        <taxon>Rickettsiaceae</taxon>
        <taxon>Rickettsieae</taxon>
        <taxon>Orientia</taxon>
    </lineage>
</organism>
<proteinExistence type="inferred from homology"/>
<evidence type="ECO:0000255" key="1">
    <source>
        <dbReference type="HAMAP-Rule" id="MF_01343"/>
    </source>
</evidence>
<evidence type="ECO:0000305" key="2"/>
<accession>A5CC63</accession>
<dbReference type="EMBL" id="AM494475">
    <property type="protein sequence ID" value="CAM79229.1"/>
    <property type="molecule type" value="Genomic_DNA"/>
</dbReference>
<dbReference type="RefSeq" id="WP_011944309.1">
    <property type="nucleotide sequence ID" value="NC_009488.1"/>
</dbReference>
<dbReference type="SMR" id="A5CC63"/>
<dbReference type="KEGG" id="ots:OTBS_0163"/>
<dbReference type="eggNOG" id="COG0184">
    <property type="taxonomic scope" value="Bacteria"/>
</dbReference>
<dbReference type="HOGENOM" id="CLU_148518_0_0_5"/>
<dbReference type="Proteomes" id="UP000001565">
    <property type="component" value="Chromosome"/>
</dbReference>
<dbReference type="GO" id="GO:0022627">
    <property type="term" value="C:cytosolic small ribosomal subunit"/>
    <property type="evidence" value="ECO:0007669"/>
    <property type="project" value="TreeGrafter"/>
</dbReference>
<dbReference type="GO" id="GO:0019843">
    <property type="term" value="F:rRNA binding"/>
    <property type="evidence" value="ECO:0007669"/>
    <property type="project" value="UniProtKB-UniRule"/>
</dbReference>
<dbReference type="GO" id="GO:0003735">
    <property type="term" value="F:structural constituent of ribosome"/>
    <property type="evidence" value="ECO:0007669"/>
    <property type="project" value="InterPro"/>
</dbReference>
<dbReference type="GO" id="GO:0006412">
    <property type="term" value="P:translation"/>
    <property type="evidence" value="ECO:0007669"/>
    <property type="project" value="UniProtKB-UniRule"/>
</dbReference>
<dbReference type="CDD" id="cd00677">
    <property type="entry name" value="S15_NS1_EPRS_RNA-bind"/>
    <property type="match status" value="1"/>
</dbReference>
<dbReference type="FunFam" id="1.10.287.10:FF:000002">
    <property type="entry name" value="30S ribosomal protein S15"/>
    <property type="match status" value="1"/>
</dbReference>
<dbReference type="Gene3D" id="6.10.250.3130">
    <property type="match status" value="1"/>
</dbReference>
<dbReference type="Gene3D" id="1.10.287.10">
    <property type="entry name" value="S15/NS1, RNA-binding"/>
    <property type="match status" value="1"/>
</dbReference>
<dbReference type="HAMAP" id="MF_01343_B">
    <property type="entry name" value="Ribosomal_uS15_B"/>
    <property type="match status" value="1"/>
</dbReference>
<dbReference type="InterPro" id="IPR000589">
    <property type="entry name" value="Ribosomal_uS15"/>
</dbReference>
<dbReference type="InterPro" id="IPR005290">
    <property type="entry name" value="Ribosomal_uS15_bac-type"/>
</dbReference>
<dbReference type="InterPro" id="IPR009068">
    <property type="entry name" value="uS15_NS1_RNA-bd_sf"/>
</dbReference>
<dbReference type="NCBIfam" id="TIGR00952">
    <property type="entry name" value="S15_bact"/>
    <property type="match status" value="1"/>
</dbReference>
<dbReference type="PANTHER" id="PTHR23321">
    <property type="entry name" value="RIBOSOMAL PROTEIN S15, BACTERIAL AND ORGANELLAR"/>
    <property type="match status" value="1"/>
</dbReference>
<dbReference type="PANTHER" id="PTHR23321:SF26">
    <property type="entry name" value="SMALL RIBOSOMAL SUBUNIT PROTEIN US15M"/>
    <property type="match status" value="1"/>
</dbReference>
<dbReference type="Pfam" id="PF00312">
    <property type="entry name" value="Ribosomal_S15"/>
    <property type="match status" value="1"/>
</dbReference>
<dbReference type="SMART" id="SM01387">
    <property type="entry name" value="Ribosomal_S15"/>
    <property type="match status" value="1"/>
</dbReference>
<dbReference type="SUPFAM" id="SSF47060">
    <property type="entry name" value="S15/NS1 RNA-binding domain"/>
    <property type="match status" value="1"/>
</dbReference>
<name>RS15_ORITB</name>
<sequence>MSITVERKKALISEYADLENNTGSVEVQCAILTERIINLTQHCKINFKDFHSKRGLLMLVSSRRKLLSYLKKKDLNRYTQLINRLGLRK</sequence>